<gene>
    <name evidence="1" type="primary">tusD</name>
    <name type="ordered locus">ECH74115_4654</name>
</gene>
<comment type="function">
    <text evidence="1">Part of a sulfur-relay system required for 2-thiolation of 5-methylaminomethyl-2-thiouridine (mnm(5)s(2)U) at tRNA wobble positions. Accepts sulfur from TusA and transfers it in turn to TusE.</text>
</comment>
<comment type="subunit">
    <text evidence="1">Heterohexamer, formed by a dimer of trimers. The hexameric TusBCD complex contains 2 copies each of TusB, TusC and TusD. The TusBCD complex interacts with TusE.</text>
</comment>
<comment type="subcellular location">
    <subcellularLocation>
        <location evidence="1">Cytoplasm</location>
    </subcellularLocation>
</comment>
<comment type="similarity">
    <text evidence="1">Belongs to the DsrE/TusD family.</text>
</comment>
<protein>
    <recommendedName>
        <fullName evidence="1">Sulfurtransferase TusD</fullName>
        <ecNumber evidence="1">2.8.1.-</ecNumber>
    </recommendedName>
    <alternativeName>
        <fullName evidence="1">tRNA 2-thiouridine synthesizing protein D</fullName>
    </alternativeName>
</protein>
<accession>B5YTQ2</accession>
<organism>
    <name type="scientific">Escherichia coli O157:H7 (strain EC4115 / EHEC)</name>
    <dbReference type="NCBI Taxonomy" id="444450"/>
    <lineage>
        <taxon>Bacteria</taxon>
        <taxon>Pseudomonadati</taxon>
        <taxon>Pseudomonadota</taxon>
        <taxon>Gammaproteobacteria</taxon>
        <taxon>Enterobacterales</taxon>
        <taxon>Enterobacteriaceae</taxon>
        <taxon>Escherichia</taxon>
    </lineage>
</organism>
<reference key="1">
    <citation type="journal article" date="2011" name="Proc. Natl. Acad. Sci. U.S.A.">
        <title>Genomic anatomy of Escherichia coli O157:H7 outbreaks.</title>
        <authorList>
            <person name="Eppinger M."/>
            <person name="Mammel M.K."/>
            <person name="Leclerc J.E."/>
            <person name="Ravel J."/>
            <person name="Cebula T.A."/>
        </authorList>
    </citation>
    <scope>NUCLEOTIDE SEQUENCE [LARGE SCALE GENOMIC DNA]</scope>
    <source>
        <strain>EC4115 / EHEC</strain>
    </source>
</reference>
<proteinExistence type="inferred from homology"/>
<evidence type="ECO:0000255" key="1">
    <source>
        <dbReference type="HAMAP-Rule" id="MF_00390"/>
    </source>
</evidence>
<sequence>MRFAIVVTGPAYGTQQASSAFQFAQALIAEGHKLSSVFFYREGVYNANHLTSPASDEFDLVRGWQQLNAQHGVALNICVAAALRRGVVDEMEAGRLGLASSNLQQGFTLSGLGALAEASLTCDRVVQF</sequence>
<dbReference type="EC" id="2.8.1.-" evidence="1"/>
<dbReference type="EMBL" id="CP001164">
    <property type="protein sequence ID" value="ACI34850.1"/>
    <property type="molecule type" value="Genomic_DNA"/>
</dbReference>
<dbReference type="RefSeq" id="WP_001209704.1">
    <property type="nucleotide sequence ID" value="NC_011353.1"/>
</dbReference>
<dbReference type="SMR" id="B5YTQ2"/>
<dbReference type="KEGG" id="ecf:ECH74115_4654"/>
<dbReference type="HOGENOM" id="CLU_132095_0_0_6"/>
<dbReference type="GO" id="GO:1990228">
    <property type="term" value="C:sulfurtransferase complex"/>
    <property type="evidence" value="ECO:0007669"/>
    <property type="project" value="TreeGrafter"/>
</dbReference>
<dbReference type="GO" id="GO:0097163">
    <property type="term" value="F:sulfur carrier activity"/>
    <property type="evidence" value="ECO:0007669"/>
    <property type="project" value="TreeGrafter"/>
</dbReference>
<dbReference type="GO" id="GO:0016783">
    <property type="term" value="F:sulfurtransferase activity"/>
    <property type="evidence" value="ECO:0007669"/>
    <property type="project" value="UniProtKB-UniRule"/>
</dbReference>
<dbReference type="GO" id="GO:0002143">
    <property type="term" value="P:tRNA wobble position uridine thiolation"/>
    <property type="evidence" value="ECO:0007669"/>
    <property type="project" value="TreeGrafter"/>
</dbReference>
<dbReference type="FunFam" id="3.40.1260.10:FF:000001">
    <property type="entry name" value="Sulfurtransferase TusD"/>
    <property type="match status" value="1"/>
</dbReference>
<dbReference type="Gene3D" id="3.40.1260.10">
    <property type="entry name" value="DsrEFH-like"/>
    <property type="match status" value="1"/>
</dbReference>
<dbReference type="HAMAP" id="MF_00390">
    <property type="entry name" value="Thiourid_synth_D"/>
    <property type="match status" value="1"/>
</dbReference>
<dbReference type="InterPro" id="IPR027396">
    <property type="entry name" value="DsrEFH-like"/>
</dbReference>
<dbReference type="InterPro" id="IPR003787">
    <property type="entry name" value="Sulphur_relay_DsrE/F-like"/>
</dbReference>
<dbReference type="InterPro" id="IPR017463">
    <property type="entry name" value="Sulphur_relay_TusD/DsrE"/>
</dbReference>
<dbReference type="NCBIfam" id="NF001237">
    <property type="entry name" value="PRK00207.1"/>
    <property type="match status" value="1"/>
</dbReference>
<dbReference type="NCBIfam" id="TIGR03012">
    <property type="entry name" value="sulf_tusD_dsrE"/>
    <property type="match status" value="1"/>
</dbReference>
<dbReference type="PANTHER" id="PTHR34874">
    <property type="entry name" value="PROTEIN YCHN"/>
    <property type="match status" value="1"/>
</dbReference>
<dbReference type="PANTHER" id="PTHR34874:SF3">
    <property type="entry name" value="SULFURTRANSFERASE TUSD"/>
    <property type="match status" value="1"/>
</dbReference>
<dbReference type="Pfam" id="PF02635">
    <property type="entry name" value="DsrE"/>
    <property type="match status" value="1"/>
</dbReference>
<dbReference type="SUPFAM" id="SSF75169">
    <property type="entry name" value="DsrEFH-like"/>
    <property type="match status" value="1"/>
</dbReference>
<keyword id="KW-0963">Cytoplasm</keyword>
<keyword id="KW-0808">Transferase</keyword>
<keyword id="KW-0819">tRNA processing</keyword>
<name>TUSD_ECO5E</name>
<feature type="chain" id="PRO_1000122857" description="Sulfurtransferase TusD">
    <location>
        <begin position="1"/>
        <end position="128"/>
    </location>
</feature>
<feature type="active site" description="Cysteine persulfide intermediate" evidence="1">
    <location>
        <position position="78"/>
    </location>
</feature>